<comment type="function">
    <text evidence="1">Structural rigidity of the outer membrane of elementary bodies and porin forming, permitting diffusion of solutes through the intracellular reticulate body membrane.</text>
</comment>
<comment type="subunit">
    <text evidence="1">Disulfide bond interactions within and between MOMP molecules and other components form high molecular-weight oligomers.</text>
</comment>
<comment type="subcellular location">
    <subcellularLocation>
        <location>Cell outer membrane</location>
        <topology>Multi-pass membrane protein</topology>
    </subcellularLocation>
</comment>
<name>OMPH2_PASMD</name>
<feature type="signal peptide" evidence="1">
    <location>
        <begin position="1"/>
        <end position="20"/>
    </location>
</feature>
<feature type="chain" id="PRO_0000025271" description="Major outer membrane protein">
    <location>
        <begin position="21"/>
        <end position="343"/>
    </location>
</feature>
<keyword id="KW-0998">Cell outer membrane</keyword>
<keyword id="KW-1015">Disulfide bond</keyword>
<keyword id="KW-0406">Ion transport</keyword>
<keyword id="KW-0472">Membrane</keyword>
<keyword id="KW-0626">Porin</keyword>
<keyword id="KW-0732">Signal</keyword>
<keyword id="KW-0812">Transmembrane</keyword>
<keyword id="KW-1134">Transmembrane beta strand</keyword>
<keyword id="KW-0813">Transport</keyword>
<accession>O54340</accession>
<evidence type="ECO:0000250" key="1"/>
<dbReference type="EMBL" id="U52200">
    <property type="protein sequence ID" value="AAC02244.1"/>
    <property type="molecule type" value="Genomic_DNA"/>
</dbReference>
<dbReference type="RefSeq" id="WP_005756236.1">
    <property type="nucleotide sequence ID" value="NZ_JABCJQ010000006.1"/>
</dbReference>
<dbReference type="SMR" id="O54340"/>
<dbReference type="GO" id="GO:0009279">
    <property type="term" value="C:cell outer membrane"/>
    <property type="evidence" value="ECO:0007669"/>
    <property type="project" value="UniProtKB-SubCell"/>
</dbReference>
<dbReference type="GO" id="GO:0046930">
    <property type="term" value="C:pore complex"/>
    <property type="evidence" value="ECO:0007669"/>
    <property type="project" value="UniProtKB-KW"/>
</dbReference>
<dbReference type="GO" id="GO:0015288">
    <property type="term" value="F:porin activity"/>
    <property type="evidence" value="ECO:0007669"/>
    <property type="project" value="UniProtKB-KW"/>
</dbReference>
<dbReference type="GO" id="GO:0006811">
    <property type="term" value="P:monoatomic ion transport"/>
    <property type="evidence" value="ECO:0007669"/>
    <property type="project" value="UniProtKB-KW"/>
</dbReference>
<dbReference type="CDD" id="cd00342">
    <property type="entry name" value="gram_neg_porins"/>
    <property type="match status" value="1"/>
</dbReference>
<dbReference type="Gene3D" id="2.40.160.10">
    <property type="entry name" value="Porin"/>
    <property type="match status" value="1"/>
</dbReference>
<dbReference type="InterPro" id="IPR050298">
    <property type="entry name" value="Gram-neg_bact_OMP"/>
</dbReference>
<dbReference type="InterPro" id="IPR033900">
    <property type="entry name" value="Gram_neg_porin_domain"/>
</dbReference>
<dbReference type="InterPro" id="IPR023614">
    <property type="entry name" value="Porin_dom_sf"/>
</dbReference>
<dbReference type="InterPro" id="IPR002299">
    <property type="entry name" value="Porin_Neis"/>
</dbReference>
<dbReference type="PANTHER" id="PTHR34501:SF2">
    <property type="entry name" value="OUTER MEMBRANE PORIN F-RELATED"/>
    <property type="match status" value="1"/>
</dbReference>
<dbReference type="PANTHER" id="PTHR34501">
    <property type="entry name" value="PROTEIN YDDL-RELATED"/>
    <property type="match status" value="1"/>
</dbReference>
<dbReference type="Pfam" id="PF13609">
    <property type="entry name" value="Porin_4"/>
    <property type="match status" value="1"/>
</dbReference>
<dbReference type="PRINTS" id="PR00184">
    <property type="entry name" value="NEISSPPORIN"/>
</dbReference>
<dbReference type="SUPFAM" id="SSF56935">
    <property type="entry name" value="Porins"/>
    <property type="match status" value="1"/>
</dbReference>
<reference key="1">
    <citation type="submission" date="1996-03" db="EMBL/GenBank/DDBJ databases">
        <authorList>
            <person name="Luo Y."/>
            <person name="Glisson J.R."/>
            <person name="Jackwood M.W."/>
            <person name="Hancock R.E.M."/>
            <person name="Bains M."/>
            <person name="Cheng I.N."/>
            <person name="Wang C."/>
        </authorList>
    </citation>
    <scope>NUCLEOTIDE SEQUENCE [GENOMIC DNA]</scope>
    <source>
        <strain>ATCC 15742 / P1059</strain>
    </source>
</reference>
<proteinExistence type="inferred from homology"/>
<gene>
    <name type="primary">ompH</name>
</gene>
<sequence length="343" mass="37107">MKKTIVALAVAAVAATSANAATVYNQDGTKVDVNGSVRLILKKEKNERGDLVDNGSRVSFKASHDLGEGLSALAYAELRFSKNEKVEVKDAQNQQVVRKYEVERIGNDVHVKRLYAGFAYEGLGTLTFGNQLTIGDDVGVSDYTYFLGGINNLLSSGEKAINFKSAEFNGFTFGGAYVFSADADKQAPRDGRGFVVAGLYNRKMGDVGFALEAGYSQKYVTAAAKQEKEKAFMVGTELSYAGLALGVDYAQSKVTNVEGKKRALEVGLNYDINDKAKVYTDLIWAKEGPKGATTRDRSIILGAGYKLHKQVETFVEGGWGREKDANGVTTKDNKVGVGLRVHF</sequence>
<protein>
    <recommendedName>
        <fullName>Major outer membrane protein</fullName>
        <shortName>MOMP</shortName>
    </recommendedName>
    <alternativeName>
        <fullName>Outer membrane protein H</fullName>
    </alternativeName>
</protein>
<organism>
    <name type="scientific">Pasteurella multocida</name>
    <dbReference type="NCBI Taxonomy" id="747"/>
    <lineage>
        <taxon>Bacteria</taxon>
        <taxon>Pseudomonadati</taxon>
        <taxon>Pseudomonadota</taxon>
        <taxon>Gammaproteobacteria</taxon>
        <taxon>Pasteurellales</taxon>
        <taxon>Pasteurellaceae</taxon>
        <taxon>Pasteurella</taxon>
    </lineage>
</organism>